<evidence type="ECO:0000255" key="1">
    <source>
        <dbReference type="HAMAP-Rule" id="MF_00270"/>
    </source>
</evidence>
<evidence type="ECO:0000305" key="2"/>
<sequence>MARYFRRRKFCRFTAENVVEIDYKDIATLKNYISESGKIVPSRITGTRAKYQRQLARAIKRARYLALLPYTDNHQ</sequence>
<dbReference type="EMBL" id="CP000671">
    <property type="protein sequence ID" value="ABQ97551.1"/>
    <property type="molecule type" value="Genomic_DNA"/>
</dbReference>
<dbReference type="SMR" id="A5U9V0"/>
<dbReference type="KEGG" id="hip:CGSHiEE_00265"/>
<dbReference type="HOGENOM" id="CLU_148710_2_2_6"/>
<dbReference type="GO" id="GO:0022627">
    <property type="term" value="C:cytosolic small ribosomal subunit"/>
    <property type="evidence" value="ECO:0007669"/>
    <property type="project" value="TreeGrafter"/>
</dbReference>
<dbReference type="GO" id="GO:0070181">
    <property type="term" value="F:small ribosomal subunit rRNA binding"/>
    <property type="evidence" value="ECO:0007669"/>
    <property type="project" value="TreeGrafter"/>
</dbReference>
<dbReference type="GO" id="GO:0003735">
    <property type="term" value="F:structural constituent of ribosome"/>
    <property type="evidence" value="ECO:0007669"/>
    <property type="project" value="InterPro"/>
</dbReference>
<dbReference type="GO" id="GO:0006412">
    <property type="term" value="P:translation"/>
    <property type="evidence" value="ECO:0007669"/>
    <property type="project" value="UniProtKB-UniRule"/>
</dbReference>
<dbReference type="FunFam" id="4.10.640.10:FF:000001">
    <property type="entry name" value="30S ribosomal protein S18"/>
    <property type="match status" value="1"/>
</dbReference>
<dbReference type="Gene3D" id="4.10.640.10">
    <property type="entry name" value="Ribosomal protein S18"/>
    <property type="match status" value="1"/>
</dbReference>
<dbReference type="HAMAP" id="MF_00270">
    <property type="entry name" value="Ribosomal_bS18"/>
    <property type="match status" value="1"/>
</dbReference>
<dbReference type="InterPro" id="IPR001648">
    <property type="entry name" value="Ribosomal_bS18"/>
</dbReference>
<dbReference type="InterPro" id="IPR018275">
    <property type="entry name" value="Ribosomal_bS18_CS"/>
</dbReference>
<dbReference type="InterPro" id="IPR036870">
    <property type="entry name" value="Ribosomal_bS18_sf"/>
</dbReference>
<dbReference type="NCBIfam" id="TIGR00165">
    <property type="entry name" value="S18"/>
    <property type="match status" value="1"/>
</dbReference>
<dbReference type="PANTHER" id="PTHR13479">
    <property type="entry name" value="30S RIBOSOMAL PROTEIN S18"/>
    <property type="match status" value="1"/>
</dbReference>
<dbReference type="PANTHER" id="PTHR13479:SF40">
    <property type="entry name" value="SMALL RIBOSOMAL SUBUNIT PROTEIN BS18M"/>
    <property type="match status" value="1"/>
</dbReference>
<dbReference type="Pfam" id="PF01084">
    <property type="entry name" value="Ribosomal_S18"/>
    <property type="match status" value="1"/>
</dbReference>
<dbReference type="PRINTS" id="PR00974">
    <property type="entry name" value="RIBOSOMALS18"/>
</dbReference>
<dbReference type="SUPFAM" id="SSF46911">
    <property type="entry name" value="Ribosomal protein S18"/>
    <property type="match status" value="1"/>
</dbReference>
<dbReference type="PROSITE" id="PS00057">
    <property type="entry name" value="RIBOSOMAL_S18"/>
    <property type="match status" value="1"/>
</dbReference>
<reference key="1">
    <citation type="journal article" date="2007" name="Genome Biol.">
        <title>Characterization and modeling of the Haemophilus influenzae core and supragenomes based on the complete genomic sequences of Rd and 12 clinical nontypeable strains.</title>
        <authorList>
            <person name="Hogg J.S."/>
            <person name="Hu F.Z."/>
            <person name="Janto B."/>
            <person name="Boissy R."/>
            <person name="Hayes J."/>
            <person name="Keefe R."/>
            <person name="Post J.C."/>
            <person name="Ehrlich G.D."/>
        </authorList>
    </citation>
    <scope>NUCLEOTIDE SEQUENCE [LARGE SCALE GENOMIC DNA]</scope>
    <source>
        <strain>PittEE</strain>
    </source>
</reference>
<name>RS18_HAEIE</name>
<accession>A5U9V0</accession>
<keyword id="KW-0687">Ribonucleoprotein</keyword>
<keyword id="KW-0689">Ribosomal protein</keyword>
<keyword id="KW-0694">RNA-binding</keyword>
<keyword id="KW-0699">rRNA-binding</keyword>
<feature type="chain" id="PRO_1000003503" description="Small ribosomal subunit protein bS18">
    <location>
        <begin position="1"/>
        <end position="75"/>
    </location>
</feature>
<comment type="function">
    <text evidence="1">Binds as a heterodimer with protein bS6 to the central domain of the 16S rRNA, where it helps stabilize the platform of the 30S subunit.</text>
</comment>
<comment type="subunit">
    <text evidence="1">Part of the 30S ribosomal subunit. Forms a tight heterodimer with protein bS6.</text>
</comment>
<comment type="similarity">
    <text evidence="1">Belongs to the bacterial ribosomal protein bS18 family.</text>
</comment>
<proteinExistence type="inferred from homology"/>
<organism>
    <name type="scientific">Haemophilus influenzae (strain PittEE)</name>
    <dbReference type="NCBI Taxonomy" id="374930"/>
    <lineage>
        <taxon>Bacteria</taxon>
        <taxon>Pseudomonadati</taxon>
        <taxon>Pseudomonadota</taxon>
        <taxon>Gammaproteobacteria</taxon>
        <taxon>Pasteurellales</taxon>
        <taxon>Pasteurellaceae</taxon>
        <taxon>Haemophilus</taxon>
    </lineage>
</organism>
<protein>
    <recommendedName>
        <fullName evidence="1">Small ribosomal subunit protein bS18</fullName>
    </recommendedName>
    <alternativeName>
        <fullName evidence="2">30S ribosomal protein S18</fullName>
    </alternativeName>
</protein>
<gene>
    <name evidence="1" type="primary">rpsR</name>
    <name type="ordered locus">CGSHiEE_00265</name>
</gene>